<accession>Q5T2R2</accession>
<accession>Q53F75</accession>
<accession>Q6P473</accession>
<accession>Q86WQ8</accession>
<accession>Q9Y2W5</accession>
<sequence>MASRWWRWRRGCSWKPAARSPGPGSPGRAGPLGPSAAAEVRAQVHRRKGLDLSQIPYINLVKHLTSACPNVCRISRFHHTTPDSKTHSGEKYTDPFKLGWRDLKGLYEDIRKELLISTSELKEMSEYYFDGKGKAFRPIIVALMARACNIHHNNSRHVQASQRAIALIAEMIHTASLVHDDVIDDASSRRGKHTVNKIWGEKKAVLAGDLILSAASIALARIGNTTVISILTQVIEDLVRGEFLQLGSKENENERFAHYLEKTFKKTASLIANSCKAVSVLGCPDPVVHEIAYQYGKNVGIAFQLIDDVLDFTSCSDQMGKPTSADLKLGLATGPVLFACQQFPEMNAMIMRRFSLPGDVDRARQYVLQSDGVQQTTYLAQQYCHEAIREISKLRPSPERDALIQLSEIVLTRDK</sequence>
<dbReference type="EC" id="2.5.1.91" evidence="5"/>
<dbReference type="EMBL" id="AF118395">
    <property type="protein sequence ID" value="AAD28559.1"/>
    <property type="molecule type" value="mRNA"/>
</dbReference>
<dbReference type="EMBL" id="AB210838">
    <property type="protein sequence ID" value="BAE48216.1"/>
    <property type="molecule type" value="mRNA"/>
</dbReference>
<dbReference type="EMBL" id="AK223414">
    <property type="protein sequence ID" value="BAD97134.1"/>
    <property type="molecule type" value="mRNA"/>
</dbReference>
<dbReference type="EMBL" id="AL390961">
    <property type="status" value="NOT_ANNOTATED_CDS"/>
    <property type="molecule type" value="Genomic_DNA"/>
</dbReference>
<dbReference type="EMBL" id="BC049211">
    <property type="protein sequence ID" value="AAH49211.1"/>
    <property type="molecule type" value="mRNA"/>
</dbReference>
<dbReference type="EMBL" id="BC063635">
    <property type="protein sequence ID" value="AAH63635.1"/>
    <property type="molecule type" value="mRNA"/>
</dbReference>
<dbReference type="CCDS" id="CCDS31168.1">
    <molecule id="Q5T2R2-1"/>
</dbReference>
<dbReference type="RefSeq" id="NP_001308907.1">
    <molecule id="Q5T2R2-2"/>
    <property type="nucleotide sequence ID" value="NM_001321978.2"/>
</dbReference>
<dbReference type="RefSeq" id="NP_055132.2">
    <molecule id="Q5T2R2-1"/>
    <property type="nucleotide sequence ID" value="NM_014317.5"/>
</dbReference>
<dbReference type="SMR" id="Q5T2R2"/>
<dbReference type="BioGRID" id="117125">
    <property type="interactions" value="26"/>
</dbReference>
<dbReference type="FunCoup" id="Q5T2R2">
    <property type="interactions" value="493"/>
</dbReference>
<dbReference type="IntAct" id="Q5T2R2">
    <property type="interactions" value="17"/>
</dbReference>
<dbReference type="MINT" id="Q5T2R2"/>
<dbReference type="STRING" id="9606.ENSP00000365388"/>
<dbReference type="iPTMnet" id="Q5T2R2"/>
<dbReference type="PhosphoSitePlus" id="Q5T2R2"/>
<dbReference type="BioMuta" id="PDSS1"/>
<dbReference type="DMDM" id="74744657"/>
<dbReference type="jPOST" id="Q5T2R2"/>
<dbReference type="MassIVE" id="Q5T2R2"/>
<dbReference type="PaxDb" id="9606-ENSP00000365388"/>
<dbReference type="PeptideAtlas" id="Q5T2R2"/>
<dbReference type="ProteomicsDB" id="64353">
    <molecule id="Q5T2R2-1"/>
</dbReference>
<dbReference type="ProteomicsDB" id="64354">
    <molecule id="Q5T2R2-2"/>
</dbReference>
<dbReference type="ProteomicsDB" id="64355">
    <molecule id="Q5T2R2-3"/>
</dbReference>
<dbReference type="Pumba" id="Q5T2R2"/>
<dbReference type="Antibodypedia" id="25917">
    <property type="antibodies" value="55 antibodies from 17 providers"/>
</dbReference>
<dbReference type="DNASU" id="23590"/>
<dbReference type="Ensembl" id="ENST00000376215.10">
    <molecule id="Q5T2R2-1"/>
    <property type="protein sequence ID" value="ENSP00000365388.5"/>
    <property type="gene ID" value="ENSG00000148459.16"/>
</dbReference>
<dbReference type="GeneID" id="23590"/>
<dbReference type="KEGG" id="hsa:23590"/>
<dbReference type="MANE-Select" id="ENST00000376215.10">
    <property type="protein sequence ID" value="ENSP00000365388.5"/>
    <property type="RefSeq nucleotide sequence ID" value="NM_014317.5"/>
    <property type="RefSeq protein sequence ID" value="NP_055132.2"/>
</dbReference>
<dbReference type="UCSC" id="uc001isv.4">
    <molecule id="Q5T2R2-1"/>
    <property type="organism name" value="human"/>
</dbReference>
<dbReference type="AGR" id="HGNC:17759"/>
<dbReference type="CTD" id="23590"/>
<dbReference type="DisGeNET" id="23590"/>
<dbReference type="GeneCards" id="PDSS1"/>
<dbReference type="GeneReviews" id="PDSS1"/>
<dbReference type="HGNC" id="HGNC:17759">
    <property type="gene designation" value="PDSS1"/>
</dbReference>
<dbReference type="HPA" id="ENSG00000148459">
    <property type="expression patterns" value="Tissue enhanced (intestine, lymphoid tissue)"/>
</dbReference>
<dbReference type="MalaCards" id="PDSS1"/>
<dbReference type="MIM" id="607429">
    <property type="type" value="gene"/>
</dbReference>
<dbReference type="MIM" id="614651">
    <property type="type" value="phenotype"/>
</dbReference>
<dbReference type="neXtProt" id="NX_Q5T2R2"/>
<dbReference type="OpenTargets" id="ENSG00000148459"/>
<dbReference type="Orphanet" id="254898">
    <property type="disease" value="Deafness-encephaloneuropathy-obesity-valvulopathy syndrome"/>
</dbReference>
<dbReference type="PharmGKB" id="PA134982512"/>
<dbReference type="VEuPathDB" id="HostDB:ENSG00000148459"/>
<dbReference type="eggNOG" id="KOG0776">
    <property type="taxonomic scope" value="Eukaryota"/>
</dbReference>
<dbReference type="GeneTree" id="ENSGT00940000153498"/>
<dbReference type="HOGENOM" id="CLU_014015_1_2_1"/>
<dbReference type="InParanoid" id="Q5T2R2"/>
<dbReference type="OMA" id="GKQMRPM"/>
<dbReference type="OrthoDB" id="9927103at2759"/>
<dbReference type="PAN-GO" id="Q5T2R2">
    <property type="GO annotations" value="4 GO annotations based on evolutionary models"/>
</dbReference>
<dbReference type="PhylomeDB" id="Q5T2R2"/>
<dbReference type="TreeFam" id="TF313548"/>
<dbReference type="BioCyc" id="MetaCyc:HS07530-MONOMER"/>
<dbReference type="BRENDA" id="2.5.1.91">
    <property type="organism ID" value="2681"/>
</dbReference>
<dbReference type="PathwayCommons" id="Q5T2R2"/>
<dbReference type="Reactome" id="R-HSA-2142789">
    <property type="pathway name" value="Ubiquinol biosynthesis"/>
</dbReference>
<dbReference type="SignaLink" id="Q5T2R2"/>
<dbReference type="UniPathway" id="UPA00232"/>
<dbReference type="BioGRID-ORCS" id="23590">
    <property type="hits" value="175 hits in 1153 CRISPR screens"/>
</dbReference>
<dbReference type="ChiTaRS" id="PDSS1">
    <property type="organism name" value="human"/>
</dbReference>
<dbReference type="GeneWiki" id="PDSS1"/>
<dbReference type="GenomeRNAi" id="23590"/>
<dbReference type="Pharos" id="Q5T2R2">
    <property type="development level" value="Tbio"/>
</dbReference>
<dbReference type="PRO" id="PR:Q5T2R2"/>
<dbReference type="Proteomes" id="UP000005640">
    <property type="component" value="Chromosome 10"/>
</dbReference>
<dbReference type="RNAct" id="Q5T2R2">
    <property type="molecule type" value="protein"/>
</dbReference>
<dbReference type="Bgee" id="ENSG00000148459">
    <property type="expression patterns" value="Expressed in mucosa of transverse colon and 158 other cell types or tissues"/>
</dbReference>
<dbReference type="ExpressionAtlas" id="Q5T2R2">
    <property type="expression patterns" value="baseline and differential"/>
</dbReference>
<dbReference type="GO" id="GO:0032478">
    <property type="term" value="C:heterotetrameric polyprenyl diphosphate synthase complex"/>
    <property type="evidence" value="ECO:0000314"/>
    <property type="project" value="BHF-UCL"/>
</dbReference>
<dbReference type="GO" id="GO:0005759">
    <property type="term" value="C:mitochondrial matrix"/>
    <property type="evidence" value="ECO:0000304"/>
    <property type="project" value="Reactome"/>
</dbReference>
<dbReference type="GO" id="GO:0005739">
    <property type="term" value="C:mitochondrion"/>
    <property type="evidence" value="ECO:0006056"/>
    <property type="project" value="FlyBase"/>
</dbReference>
<dbReference type="GO" id="GO:0032476">
    <property type="term" value="C:polyprenyl diphosphate synthase complex"/>
    <property type="evidence" value="ECO:0000318"/>
    <property type="project" value="GO_Central"/>
</dbReference>
<dbReference type="GO" id="GO:0110142">
    <property type="term" value="C:ubiquinone biosynthesis complex"/>
    <property type="evidence" value="ECO:0007669"/>
    <property type="project" value="Ensembl"/>
</dbReference>
<dbReference type="GO" id="GO:0097269">
    <property type="term" value="F:all-trans-decaprenyl-diphosphate synthase activity"/>
    <property type="evidence" value="ECO:0007669"/>
    <property type="project" value="UniProtKB-EC"/>
</dbReference>
<dbReference type="GO" id="GO:0052923">
    <property type="term" value="F:all-trans-nonaprenyl-diphosphate synthase (geranyl-diphosphate specific) activity"/>
    <property type="evidence" value="ECO:0007669"/>
    <property type="project" value="Ensembl"/>
</dbReference>
<dbReference type="GO" id="GO:0046872">
    <property type="term" value="F:metal ion binding"/>
    <property type="evidence" value="ECO:0007669"/>
    <property type="project" value="UniProtKB-KW"/>
</dbReference>
<dbReference type="GO" id="GO:0004659">
    <property type="term" value="F:prenyltransferase activity"/>
    <property type="evidence" value="ECO:0000318"/>
    <property type="project" value="GO_Central"/>
</dbReference>
<dbReference type="GO" id="GO:0046982">
    <property type="term" value="F:protein heterodimerization activity"/>
    <property type="evidence" value="ECO:0007669"/>
    <property type="project" value="Ensembl"/>
</dbReference>
<dbReference type="GO" id="GO:0008299">
    <property type="term" value="P:isoprenoid biosynthetic process"/>
    <property type="evidence" value="ECO:0000314"/>
    <property type="project" value="HGNC-UCL"/>
</dbReference>
<dbReference type="GO" id="GO:0006744">
    <property type="term" value="P:ubiquinone biosynthetic process"/>
    <property type="evidence" value="ECO:0000314"/>
    <property type="project" value="HGNC-UCL"/>
</dbReference>
<dbReference type="CDD" id="cd00685">
    <property type="entry name" value="Trans_IPPS_HT"/>
    <property type="match status" value="1"/>
</dbReference>
<dbReference type="FunFam" id="1.10.600.10:FF:000011">
    <property type="entry name" value="Decaprenyl diphosphate synthase subunit 1"/>
    <property type="match status" value="1"/>
</dbReference>
<dbReference type="Gene3D" id="1.10.600.10">
    <property type="entry name" value="Farnesyl Diphosphate Synthase"/>
    <property type="match status" value="1"/>
</dbReference>
<dbReference type="InterPro" id="IPR008949">
    <property type="entry name" value="Isoprenoid_synthase_dom_sf"/>
</dbReference>
<dbReference type="InterPro" id="IPR000092">
    <property type="entry name" value="Polyprenyl_synt"/>
</dbReference>
<dbReference type="InterPro" id="IPR033749">
    <property type="entry name" value="Polyprenyl_synt_CS"/>
</dbReference>
<dbReference type="PANTHER" id="PTHR12001:SF78">
    <property type="entry name" value="ALL TRANS-POLYPRENYL-DIPHOSPHATE SYNTHASE PDSS1"/>
    <property type="match status" value="1"/>
</dbReference>
<dbReference type="PANTHER" id="PTHR12001">
    <property type="entry name" value="GERANYLGERANYL PYROPHOSPHATE SYNTHASE"/>
    <property type="match status" value="1"/>
</dbReference>
<dbReference type="Pfam" id="PF00348">
    <property type="entry name" value="polyprenyl_synt"/>
    <property type="match status" value="1"/>
</dbReference>
<dbReference type="SFLD" id="SFLDS00005">
    <property type="entry name" value="Isoprenoid_Synthase_Type_I"/>
    <property type="match status" value="1"/>
</dbReference>
<dbReference type="SUPFAM" id="SSF48576">
    <property type="entry name" value="Terpenoid synthases"/>
    <property type="match status" value="1"/>
</dbReference>
<dbReference type="PROSITE" id="PS00723">
    <property type="entry name" value="POLYPRENYL_SYNTHASE_1"/>
    <property type="match status" value="1"/>
</dbReference>
<dbReference type="PROSITE" id="PS00444">
    <property type="entry name" value="POLYPRENYL_SYNTHASE_2"/>
    <property type="match status" value="1"/>
</dbReference>
<evidence type="ECO:0000250" key="1">
    <source>
        <dbReference type="UniProtKB" id="P14324"/>
    </source>
</evidence>
<evidence type="ECO:0000250" key="2">
    <source>
        <dbReference type="UniProtKB" id="Q12051"/>
    </source>
</evidence>
<evidence type="ECO:0000250" key="3">
    <source>
        <dbReference type="UniProtKB" id="Q33DR2"/>
    </source>
</evidence>
<evidence type="ECO:0000256" key="4">
    <source>
        <dbReference type="SAM" id="MobiDB-lite"/>
    </source>
</evidence>
<evidence type="ECO:0000269" key="5">
    <source>
    </source>
</evidence>
<evidence type="ECO:0000269" key="6">
    <source>
    </source>
</evidence>
<evidence type="ECO:0000269" key="7">
    <source>
    </source>
</evidence>
<evidence type="ECO:0000303" key="8">
    <source>
    </source>
</evidence>
<evidence type="ECO:0000303" key="9">
    <source>
    </source>
</evidence>
<evidence type="ECO:0000303" key="10">
    <source>
    </source>
</evidence>
<evidence type="ECO:0000305" key="11"/>
<evidence type="ECO:0000305" key="12">
    <source>
    </source>
</evidence>
<evidence type="ECO:0000312" key="13">
    <source>
        <dbReference type="HGNC" id="HGNC:17759"/>
    </source>
</evidence>
<feature type="chain" id="PRO_0000123975" description="All trans-polyprenyl-diphosphate synthase PDSS1">
    <location>
        <begin position="1"/>
        <end position="415"/>
    </location>
</feature>
<feature type="region of interest" description="Disordered" evidence="4">
    <location>
        <begin position="16"/>
        <end position="35"/>
    </location>
</feature>
<feature type="binding site" evidence="1">
    <location>
        <position position="134"/>
    </location>
    <ligand>
        <name>isopentenyl diphosphate</name>
        <dbReference type="ChEBI" id="CHEBI:128769"/>
    </ligand>
</feature>
<feature type="binding site" evidence="1">
    <location>
        <position position="137"/>
    </location>
    <ligand>
        <name>isopentenyl diphosphate</name>
        <dbReference type="ChEBI" id="CHEBI:128769"/>
    </ligand>
</feature>
<feature type="binding site" evidence="2">
    <location>
        <position position="173"/>
    </location>
    <ligand>
        <name>isopentenyl diphosphate</name>
        <dbReference type="ChEBI" id="CHEBI:128769"/>
    </ligand>
</feature>
<feature type="binding site" evidence="1">
    <location>
        <position position="180"/>
    </location>
    <ligand>
        <name>Mg(2+)</name>
        <dbReference type="ChEBI" id="CHEBI:18420"/>
        <label>1</label>
    </ligand>
</feature>
<feature type="binding site" evidence="1">
    <location>
        <position position="180"/>
    </location>
    <ligand>
        <name>Mg(2+)</name>
        <dbReference type="ChEBI" id="CHEBI:18420"/>
        <label>2</label>
    </ligand>
</feature>
<feature type="binding site" evidence="1">
    <location>
        <position position="184"/>
    </location>
    <ligand>
        <name>Mg(2+)</name>
        <dbReference type="ChEBI" id="CHEBI:18420"/>
        <label>1</label>
    </ligand>
</feature>
<feature type="binding site" evidence="1">
    <location>
        <position position="184"/>
    </location>
    <ligand>
        <name>Mg(2+)</name>
        <dbReference type="ChEBI" id="CHEBI:18420"/>
        <label>2</label>
    </ligand>
</feature>
<feature type="binding site" evidence="1">
    <location>
        <position position="190"/>
    </location>
    <ligand>
        <name>isopentenyl diphosphate</name>
        <dbReference type="ChEBI" id="CHEBI:128769"/>
    </ligand>
</feature>
<feature type="splice variant" id="VSP_017100" description="In isoform 3." evidence="8">
    <original>MASRWWRWRRGCSWKPAARSPGPGSPGRAGPLGPSAAAEVRA</original>
    <variation>MPA</variation>
    <location>
        <begin position="1"/>
        <end position="42"/>
    </location>
</feature>
<feature type="splice variant" id="VSP_017101" description="In isoform 2." evidence="9">
    <original>SVLGCPDPVVHEIAYQYGKNVGIAFQLIDDVLDFTSCSDQMGKPTSADLKLGLATGPVLFACQQFPEMNAMIMRRFSLPGDVDRARQYVLQSDGVQQTTYLAQQYCHEAIREISKLRPSPERDALIQLSEIVLTRDK</original>
    <variation>FPRNECYDHATVQFAWRCRQSSTVCTTE</variation>
    <location>
        <begin position="279"/>
        <end position="415"/>
    </location>
</feature>
<feature type="sequence variant" id="VAR_034879" description="In COQ10D2; dbSNP:rs119463988." evidence="6">
    <original>D</original>
    <variation>E</variation>
    <location>
        <position position="308"/>
    </location>
</feature>
<feature type="sequence conflict" description="In Ref. 5; AAH63635." evidence="11" ref="5">
    <original>G</original>
    <variation>V</variation>
    <location>
        <position position="30"/>
    </location>
</feature>
<feature type="sequence conflict" description="In Ref. 1; AAD28559." evidence="11" ref="1">
    <original>V</original>
    <variation>A</variation>
    <location>
        <position position="44"/>
    </location>
</feature>
<feature type="sequence conflict" description="In Ref. 1; AAD28559." evidence="11" ref="1">
    <original>R</original>
    <variation>Q</variation>
    <location>
        <position position="47"/>
    </location>
</feature>
<feature type="sequence conflict" description="In Ref. 1; AAD28559." evidence="11" ref="1">
    <original>I</original>
    <variation>F</variation>
    <location>
        <position position="58"/>
    </location>
</feature>
<feature type="sequence conflict" description="In Ref. 1; AAD28559." evidence="11" ref="1">
    <original>S</original>
    <variation>P</variation>
    <location>
        <position position="66"/>
    </location>
</feature>
<feature type="sequence conflict" description="In Ref. 1; AAD28559." evidence="11" ref="1">
    <original>CR</original>
    <variation>YS</variation>
    <location>
        <begin position="72"/>
        <end position="73"/>
    </location>
</feature>
<feature type="sequence conflict" description="In Ref. 1; AAD28559." evidence="11" ref="1">
    <original>R</original>
    <variation>Q</variation>
    <location>
        <position position="76"/>
    </location>
</feature>
<feature type="sequence conflict" description="In Ref. 1; AAD28559." evidence="11" ref="1">
    <original>D</original>
    <variation>Y</variation>
    <location>
        <position position="83"/>
    </location>
</feature>
<feature type="sequence conflict" description="In Ref. 1; AAD28559." evidence="11" ref="1">
    <original>D</original>
    <variation>G</variation>
    <location>
        <position position="109"/>
    </location>
</feature>
<feature type="sequence conflict" description="In Ref. 1; AAD28559." evidence="11" ref="1">
    <original>L</original>
    <variation>P</variation>
    <location>
        <position position="114"/>
    </location>
</feature>
<feature type="sequence conflict" description="In Ref. 1; AAD28559." evidence="11" ref="1">
    <original>S</original>
    <variation>T</variation>
    <location>
        <position position="119"/>
    </location>
</feature>
<feature type="sequence conflict" description="In Ref. 1; AAD28559." evidence="11" ref="1">
    <original>M</original>
    <variation>I</variation>
    <location>
        <position position="124"/>
    </location>
</feature>
<feature type="sequence conflict" description="In Ref. 1; AAD28559." evidence="11" ref="1">
    <original>G</original>
    <variation>V</variation>
    <location>
        <position position="131"/>
    </location>
</feature>
<feature type="sequence conflict" description="In Ref. 1; AAD28559." evidence="11" ref="1">
    <original>A</original>
    <variation>V</variation>
    <location>
        <position position="142"/>
    </location>
</feature>
<feature type="sequence conflict" description="In Ref. 3; BAD97134." evidence="11" ref="3">
    <original>A</original>
    <variation>V</variation>
    <location>
        <position position="186"/>
    </location>
</feature>
<feature type="sequence conflict" description="In Ref. 3; BAD97134." evidence="11" ref="3">
    <original>N</original>
    <variation>D</variation>
    <location>
        <position position="298"/>
    </location>
</feature>
<keyword id="KW-0025">Alternative splicing</keyword>
<keyword id="KW-0225">Disease variant</keyword>
<keyword id="KW-0414">Isoprene biosynthesis</keyword>
<keyword id="KW-0443">Lipid metabolism</keyword>
<keyword id="KW-0460">Magnesium</keyword>
<keyword id="KW-0479">Metal-binding</keyword>
<keyword id="KW-0496">Mitochondrion</keyword>
<keyword id="KW-1274">Primary mitochondrial disease</keyword>
<keyword id="KW-1267">Proteomics identification</keyword>
<keyword id="KW-1185">Reference proteome</keyword>
<keyword id="KW-0808">Transferase</keyword>
<keyword id="KW-0831">Ubiquinone biosynthesis</keyword>
<proteinExistence type="evidence at protein level"/>
<gene>
    <name evidence="13" type="primary">PDSS1</name>
    <name evidence="10" type="synonym">DPS1</name>
    <name type="synonym">TPRT</name>
</gene>
<comment type="function">
    <text evidence="5">Heterotetrameric enzyme that catalyzes the condensation of farnesyl diphosphate (FPP), which acts as a primer, and isopentenyl diphosphate (IPP) to produce prenyl diphosphates of varying chain lengths and participates in the determination of the side chain of ubiquinone (PubMed:16262699). Supplies nona and decaprenyl diphosphate, the precursors for the side chain of the isoprenoid quinones ubiquinone-9 (Q9)and ubiquinone-10 (Q10) respectively (PubMed:16262699). The enzyme adds isopentenyl diphosphate molecules sequentially to farnesyl diphosphate with trans stereochemistry (PubMed:16262699).</text>
</comment>
<comment type="catalytic activity">
    <reaction evidence="5">
        <text>7 isopentenyl diphosphate + (2E,6E)-farnesyl diphosphate = all-trans-decaprenyl diphosphate + 7 diphosphate</text>
        <dbReference type="Rhea" id="RHEA:27802"/>
        <dbReference type="ChEBI" id="CHEBI:33019"/>
        <dbReference type="ChEBI" id="CHEBI:60721"/>
        <dbReference type="ChEBI" id="CHEBI:128769"/>
        <dbReference type="ChEBI" id="CHEBI:175763"/>
        <dbReference type="EC" id="2.5.1.91"/>
    </reaction>
    <physiologicalReaction direction="left-to-right" evidence="12">
        <dbReference type="Rhea" id="RHEA:27803"/>
    </physiologicalReaction>
</comment>
<comment type="catalytic activity">
    <reaction evidence="3">
        <text>6 isopentenyl diphosphate + (2E,6E)-farnesyl diphosphate = all-trans-nonaprenyl diphosphate + 6 diphosphate</text>
        <dbReference type="Rhea" id="RHEA:55364"/>
        <dbReference type="ChEBI" id="CHEBI:33019"/>
        <dbReference type="ChEBI" id="CHEBI:58391"/>
        <dbReference type="ChEBI" id="CHEBI:128769"/>
        <dbReference type="ChEBI" id="CHEBI:175763"/>
    </reaction>
    <physiologicalReaction direction="left-to-right" evidence="3">
        <dbReference type="Rhea" id="RHEA:55365"/>
    </physiologicalReaction>
</comment>
<comment type="cofactor">
    <cofactor evidence="1">
        <name>Mg(2+)</name>
        <dbReference type="ChEBI" id="CHEBI:18420"/>
    </cofactor>
    <text evidence="1">Binds 2 Mg(2+) ions per subunit.</text>
</comment>
<comment type="pathway">
    <text evidence="5">Cofactor biosynthesis; ubiquinone biosynthesis.</text>
</comment>
<comment type="subunit">
    <text evidence="5">Heterotetramer composed of 2 PDSS1/DPS1 and 2 PDSS2/DLP1 subunits.</text>
</comment>
<comment type="subcellular location">
    <subcellularLocation>
        <location evidence="7">Mitochondrion</location>
    </subcellularLocation>
</comment>
<comment type="alternative products">
    <event type="alternative splicing"/>
    <isoform>
        <id>Q5T2R2-1</id>
        <name>1</name>
        <sequence type="displayed"/>
    </isoform>
    <isoform>
        <id>Q5T2R2-2</id>
        <name>2</name>
        <sequence type="described" ref="VSP_017101"/>
    </isoform>
    <isoform>
        <id>Q5T2R2-3</id>
        <name>3</name>
        <sequence type="described" ref="VSP_017100"/>
    </isoform>
</comment>
<comment type="disease" evidence="6">
    <disease id="DI-03446">
        <name>Coenzyme Q10 deficiency, primary, 2</name>
        <acronym>COQ10D2</acronym>
        <description>An autosomal recessive multisystem disorder characterized by early-onset deafness, optic atrophy, mild intellectual disability, peripheral neuropathy, obesity, livedo reticularis, and cardiac valvulopathy.</description>
        <dbReference type="MIM" id="614651"/>
    </disease>
    <text>The disease is caused by variants affecting the gene represented in this entry.</text>
</comment>
<comment type="similarity">
    <text evidence="11">Belongs to the FPP/GGPP synthase family.</text>
</comment>
<reference key="1">
    <citation type="journal article" date="2000" name="Lancet">
        <title>Quinone-responsive multiple respiratory-chain dysfunction due to widespread coenzyme Q10 deficiency.</title>
        <authorList>
            <person name="Roetig A."/>
            <person name="Appelkvist E.-L."/>
            <person name="Geromel V."/>
            <person name="Chretien D."/>
            <person name="Kadhom N."/>
            <person name="Edery P."/>
            <person name="Lebideau M."/>
            <person name="Dallner G."/>
            <person name="Munnich A."/>
            <person name="Ernster L."/>
            <person name="Rustin P."/>
        </authorList>
    </citation>
    <scope>NUCLEOTIDE SEQUENCE [MRNA] (ISOFORM 3)</scope>
</reference>
<reference key="2">
    <citation type="journal article" date="2005" name="FEBS J.">
        <title>Characterization of solanesyl and decaprenyl diphosphate synthases in mice and humans.</title>
        <authorList>
            <person name="Saiki R."/>
            <person name="Nagata A."/>
            <person name="Kainou T."/>
            <person name="Matsuda H."/>
            <person name="Kawamukai M."/>
        </authorList>
    </citation>
    <scope>NUCLEOTIDE SEQUENCE [MRNA] (ISOFORM 1)</scope>
    <scope>FUNCTION</scope>
    <scope>CATALYTIC ACTIVITY</scope>
    <scope>SUBUNIT</scope>
</reference>
<reference key="3">
    <citation type="submission" date="2005-04" db="EMBL/GenBank/DDBJ databases">
        <authorList>
            <person name="Totoki Y."/>
            <person name="Toyoda A."/>
            <person name="Takeda T."/>
            <person name="Sakaki Y."/>
            <person name="Tanaka A."/>
            <person name="Yokoyama S."/>
        </authorList>
    </citation>
    <scope>NUCLEOTIDE SEQUENCE [LARGE SCALE MRNA] (ISOFORM 1)</scope>
    <source>
        <tissue>Coronary arterial endothelium</tissue>
    </source>
</reference>
<reference key="4">
    <citation type="journal article" date="2004" name="Nature">
        <title>The DNA sequence and comparative analysis of human chromosome 10.</title>
        <authorList>
            <person name="Deloukas P."/>
            <person name="Earthrowl M.E."/>
            <person name="Grafham D.V."/>
            <person name="Rubenfield M."/>
            <person name="French L."/>
            <person name="Steward C.A."/>
            <person name="Sims S.K."/>
            <person name="Jones M.C."/>
            <person name="Searle S."/>
            <person name="Scott C."/>
            <person name="Howe K."/>
            <person name="Hunt S.E."/>
            <person name="Andrews T.D."/>
            <person name="Gilbert J.G.R."/>
            <person name="Swarbreck D."/>
            <person name="Ashurst J.L."/>
            <person name="Taylor A."/>
            <person name="Battles J."/>
            <person name="Bird C.P."/>
            <person name="Ainscough R."/>
            <person name="Almeida J.P."/>
            <person name="Ashwell R.I.S."/>
            <person name="Ambrose K.D."/>
            <person name="Babbage A.K."/>
            <person name="Bagguley C.L."/>
            <person name="Bailey J."/>
            <person name="Banerjee R."/>
            <person name="Bates K."/>
            <person name="Beasley H."/>
            <person name="Bray-Allen S."/>
            <person name="Brown A.J."/>
            <person name="Brown J.Y."/>
            <person name="Burford D.C."/>
            <person name="Burrill W."/>
            <person name="Burton J."/>
            <person name="Cahill P."/>
            <person name="Camire D."/>
            <person name="Carter N.P."/>
            <person name="Chapman J.C."/>
            <person name="Clark S.Y."/>
            <person name="Clarke G."/>
            <person name="Clee C.M."/>
            <person name="Clegg S."/>
            <person name="Corby N."/>
            <person name="Coulson A."/>
            <person name="Dhami P."/>
            <person name="Dutta I."/>
            <person name="Dunn M."/>
            <person name="Faulkner L."/>
            <person name="Frankish A."/>
            <person name="Frankland J.A."/>
            <person name="Garner P."/>
            <person name="Garnett J."/>
            <person name="Gribble S."/>
            <person name="Griffiths C."/>
            <person name="Grocock R."/>
            <person name="Gustafson E."/>
            <person name="Hammond S."/>
            <person name="Harley J.L."/>
            <person name="Hart E."/>
            <person name="Heath P.D."/>
            <person name="Ho T.P."/>
            <person name="Hopkins B."/>
            <person name="Horne J."/>
            <person name="Howden P.J."/>
            <person name="Huckle E."/>
            <person name="Hynds C."/>
            <person name="Johnson C."/>
            <person name="Johnson D."/>
            <person name="Kana A."/>
            <person name="Kay M."/>
            <person name="Kimberley A.M."/>
            <person name="Kershaw J.K."/>
            <person name="Kokkinaki M."/>
            <person name="Laird G.K."/>
            <person name="Lawlor S."/>
            <person name="Lee H.M."/>
            <person name="Leongamornlert D.A."/>
            <person name="Laird G."/>
            <person name="Lloyd C."/>
            <person name="Lloyd D.M."/>
            <person name="Loveland J."/>
            <person name="Lovell J."/>
            <person name="McLaren S."/>
            <person name="McLay K.E."/>
            <person name="McMurray A."/>
            <person name="Mashreghi-Mohammadi M."/>
            <person name="Matthews L."/>
            <person name="Milne S."/>
            <person name="Nickerson T."/>
            <person name="Nguyen M."/>
            <person name="Overton-Larty E."/>
            <person name="Palmer S.A."/>
            <person name="Pearce A.V."/>
            <person name="Peck A.I."/>
            <person name="Pelan S."/>
            <person name="Phillimore B."/>
            <person name="Porter K."/>
            <person name="Rice C.M."/>
            <person name="Rogosin A."/>
            <person name="Ross M.T."/>
            <person name="Sarafidou T."/>
            <person name="Sehra H.K."/>
            <person name="Shownkeen R."/>
            <person name="Skuce C.D."/>
            <person name="Smith M."/>
            <person name="Standring L."/>
            <person name="Sycamore N."/>
            <person name="Tester J."/>
            <person name="Thorpe A."/>
            <person name="Torcasso W."/>
            <person name="Tracey A."/>
            <person name="Tromans A."/>
            <person name="Tsolas J."/>
            <person name="Wall M."/>
            <person name="Walsh J."/>
            <person name="Wang H."/>
            <person name="Weinstock K."/>
            <person name="West A.P."/>
            <person name="Willey D.L."/>
            <person name="Whitehead S.L."/>
            <person name="Wilming L."/>
            <person name="Wray P.W."/>
            <person name="Young L."/>
            <person name="Chen Y."/>
            <person name="Lovering R.C."/>
            <person name="Moschonas N.K."/>
            <person name="Siebert R."/>
            <person name="Fechtel K."/>
            <person name="Bentley D."/>
            <person name="Durbin R.M."/>
            <person name="Hubbard T."/>
            <person name="Doucette-Stamm L."/>
            <person name="Beck S."/>
            <person name="Smith D.R."/>
            <person name="Rogers J."/>
        </authorList>
    </citation>
    <scope>NUCLEOTIDE SEQUENCE [LARGE SCALE GENOMIC DNA]</scope>
</reference>
<reference key="5">
    <citation type="journal article" date="2004" name="Genome Res.">
        <title>The status, quality, and expansion of the NIH full-length cDNA project: the Mammalian Gene Collection (MGC).</title>
        <authorList>
            <consortium name="The MGC Project Team"/>
        </authorList>
    </citation>
    <scope>NUCLEOTIDE SEQUENCE [LARGE SCALE MRNA] (ISOFORM 2)</scope>
    <scope>NUCLEOTIDE SEQUENCE [LARGE SCALE MRNA] OF 2-415 (ISOFORM 1)</scope>
    <source>
        <tissue>Brain</tissue>
        <tissue>Duodenum</tissue>
    </source>
</reference>
<reference key="6">
    <citation type="journal article" date="2015" name="Proteomics">
        <title>N-terminome analysis of the human mitochondrial proteome.</title>
        <authorList>
            <person name="Vaca Jacome A.S."/>
            <person name="Rabilloud T."/>
            <person name="Schaeffer-Reiss C."/>
            <person name="Rompais M."/>
            <person name="Ayoub D."/>
            <person name="Lane L."/>
            <person name="Bairoch A."/>
            <person name="Van Dorsselaer A."/>
            <person name="Carapito C."/>
        </authorList>
    </citation>
    <scope>IDENTIFICATION BY MASS SPECTROMETRY [LARGE SCALE ANALYSIS]</scope>
</reference>
<reference key="7">
    <citation type="journal article" date="2021" name="Cell Metab.">
        <title>Quantitative high-confidence human mitochondrial proteome and its dynamics in cellular context.</title>
        <authorList>
            <person name="Morgenstern M."/>
            <person name="Peikert C.D."/>
            <person name="Luebbert P."/>
            <person name="Suppanz I."/>
            <person name="Klemm C."/>
            <person name="Alka O."/>
            <person name="Steiert C."/>
            <person name="Naumenko N."/>
            <person name="Schendzielorz A."/>
            <person name="Melchionda L."/>
            <person name="Muehlhaeuser W.W.D."/>
            <person name="Knapp B."/>
            <person name="Busch J.D."/>
            <person name="Stiller S.B."/>
            <person name="Dannenmaier S."/>
            <person name="Lindau C."/>
            <person name="Licheva M."/>
            <person name="Eickhorst C."/>
            <person name="Galbusera R."/>
            <person name="Zerbes R.M."/>
            <person name="Ryan M.T."/>
            <person name="Kraft C."/>
            <person name="Kozjak-Pavlovic V."/>
            <person name="Drepper F."/>
            <person name="Dennerlein S."/>
            <person name="Oeljeklaus S."/>
            <person name="Pfanner N."/>
            <person name="Wiedemann N."/>
            <person name="Warscheid B."/>
        </authorList>
    </citation>
    <scope>SUBCELLULAR LOCATION</scope>
</reference>
<reference key="8">
    <citation type="journal article" date="2007" name="J. Clin. Invest.">
        <title>Prenyldiphosphate synthase, subunit 1 (PDSS1) and OH-benzoate polyprenyltransferase (COQ2) mutations in ubiquinone deficiency and oxidative phosphorylation disorders.</title>
        <authorList>
            <person name="Mollet J."/>
            <person name="Giurgea I."/>
            <person name="Schlemmer D."/>
            <person name="Dallner G."/>
            <person name="Chretien D."/>
            <person name="Delahodde A."/>
            <person name="Bacq D."/>
            <person name="de Lonlay P."/>
            <person name="Munnich A."/>
            <person name="Rotig A."/>
        </authorList>
    </citation>
    <scope>VARIANT COQ10D2 GLU-308</scope>
</reference>
<protein>
    <recommendedName>
        <fullName evidence="11">All trans-polyprenyl-diphosphate synthase PDSS1</fullName>
    </recommendedName>
    <alternativeName>
        <fullName>All-trans-decaprenyl-diphosphate synthase subunit 1</fullName>
        <ecNumber evidence="5">2.5.1.91</ecNumber>
    </alternativeName>
    <alternativeName>
        <fullName>Decaprenyl pyrophosphate synthase subunit 1</fullName>
    </alternativeName>
    <alternativeName>
        <fullName evidence="13">Decaprenyl-diphosphate synthase subunit 1</fullName>
    </alternativeName>
    <alternativeName>
        <fullName>Solanesyl-diphosphate synthase subunit 1</fullName>
    </alternativeName>
    <alternativeName>
        <fullName>Trans-prenyltransferase 1</fullName>
        <shortName>TPT 1</shortName>
    </alternativeName>
</protein>
<organism>
    <name type="scientific">Homo sapiens</name>
    <name type="common">Human</name>
    <dbReference type="NCBI Taxonomy" id="9606"/>
    <lineage>
        <taxon>Eukaryota</taxon>
        <taxon>Metazoa</taxon>
        <taxon>Chordata</taxon>
        <taxon>Craniata</taxon>
        <taxon>Vertebrata</taxon>
        <taxon>Euteleostomi</taxon>
        <taxon>Mammalia</taxon>
        <taxon>Eutheria</taxon>
        <taxon>Euarchontoglires</taxon>
        <taxon>Primates</taxon>
        <taxon>Haplorrhini</taxon>
        <taxon>Catarrhini</taxon>
        <taxon>Hominidae</taxon>
        <taxon>Homo</taxon>
    </lineage>
</organism>
<name>DPS1_HUMAN</name>